<feature type="chain" id="PRO_0000113790" description="Protein GrpE">
    <location>
        <begin position="1"/>
        <end position="200"/>
    </location>
</feature>
<name>GRPE_GEOSL</name>
<sequence length="200" mass="21997">MDKKKHGTVQSADETIAAAGFAGEAAQGKGEDVQSVAAEERIRQLETELAAKEAEAAANWDKFVRERADLENYRRRTQKEKEELLKYGNESLLQDILPVVDSMERALGHADSESLSAVIEGIRMTHGMLLGTLKKFGVVAVEAERGTVFDPAYHQAMCQVEVSELPPNTVVEVFQRGYLLNERLLRPAMVSVATVPKDAA</sequence>
<accession>Q74H60</accession>
<evidence type="ECO:0000255" key="1">
    <source>
        <dbReference type="HAMAP-Rule" id="MF_01151"/>
    </source>
</evidence>
<proteinExistence type="inferred from homology"/>
<keyword id="KW-0143">Chaperone</keyword>
<keyword id="KW-0963">Cytoplasm</keyword>
<keyword id="KW-1185">Reference proteome</keyword>
<keyword id="KW-0346">Stress response</keyword>
<protein>
    <recommendedName>
        <fullName evidence="1">Protein GrpE</fullName>
    </recommendedName>
    <alternativeName>
        <fullName evidence="1">HSP-70 cofactor</fullName>
    </alternativeName>
</protein>
<comment type="function">
    <text evidence="1">Participates actively in the response to hyperosmotic and heat shock by preventing the aggregation of stress-denatured proteins, in association with DnaK and GrpE. It is the nucleotide exchange factor for DnaK and may function as a thermosensor. Unfolded proteins bind initially to DnaJ; upon interaction with the DnaJ-bound protein, DnaK hydrolyzes its bound ATP, resulting in the formation of a stable complex. GrpE releases ADP from DnaK; ATP binding to DnaK triggers the release of the substrate protein, thus completing the reaction cycle. Several rounds of ATP-dependent interactions between DnaJ, DnaK and GrpE are required for fully efficient folding.</text>
</comment>
<comment type="subunit">
    <text evidence="1">Homodimer.</text>
</comment>
<comment type="subcellular location">
    <subcellularLocation>
        <location evidence="1">Cytoplasm</location>
    </subcellularLocation>
</comment>
<comment type="similarity">
    <text evidence="1">Belongs to the GrpE family.</text>
</comment>
<reference key="1">
    <citation type="journal article" date="2003" name="Science">
        <title>Genome of Geobacter sulfurreducens: metal reduction in subsurface environments.</title>
        <authorList>
            <person name="Methe B.A."/>
            <person name="Nelson K.E."/>
            <person name="Eisen J.A."/>
            <person name="Paulsen I.T."/>
            <person name="Nelson W.C."/>
            <person name="Heidelberg J.F."/>
            <person name="Wu D."/>
            <person name="Wu M."/>
            <person name="Ward N.L."/>
            <person name="Beanan M.J."/>
            <person name="Dodson R.J."/>
            <person name="Madupu R."/>
            <person name="Brinkac L.M."/>
            <person name="Daugherty S.C."/>
            <person name="DeBoy R.T."/>
            <person name="Durkin A.S."/>
            <person name="Gwinn M.L."/>
            <person name="Kolonay J.F."/>
            <person name="Sullivan S.A."/>
            <person name="Haft D.H."/>
            <person name="Selengut J."/>
            <person name="Davidsen T.M."/>
            <person name="Zafar N."/>
            <person name="White O."/>
            <person name="Tran B."/>
            <person name="Romero C."/>
            <person name="Forberger H.A."/>
            <person name="Weidman J.F."/>
            <person name="Khouri H.M."/>
            <person name="Feldblyum T.V."/>
            <person name="Utterback T.R."/>
            <person name="Van Aken S.E."/>
            <person name="Lovley D.R."/>
            <person name="Fraser C.M."/>
        </authorList>
    </citation>
    <scope>NUCLEOTIDE SEQUENCE [LARGE SCALE GENOMIC DNA]</scope>
    <source>
        <strain>ATCC 51573 / DSM 12127 / PCA</strain>
    </source>
</reference>
<organism>
    <name type="scientific">Geobacter sulfurreducens (strain ATCC 51573 / DSM 12127 / PCA)</name>
    <dbReference type="NCBI Taxonomy" id="243231"/>
    <lineage>
        <taxon>Bacteria</taxon>
        <taxon>Pseudomonadati</taxon>
        <taxon>Thermodesulfobacteriota</taxon>
        <taxon>Desulfuromonadia</taxon>
        <taxon>Geobacterales</taxon>
        <taxon>Geobacteraceae</taxon>
        <taxon>Geobacter</taxon>
    </lineage>
</organism>
<gene>
    <name evidence="1" type="primary">grpE</name>
    <name type="ordered locus">GSU0032</name>
</gene>
<dbReference type="EMBL" id="AE017180">
    <property type="protein sequence ID" value="AAR33367.1"/>
    <property type="molecule type" value="Genomic_DNA"/>
</dbReference>
<dbReference type="RefSeq" id="NP_951094.1">
    <property type="nucleotide sequence ID" value="NC_002939.5"/>
</dbReference>
<dbReference type="RefSeq" id="WP_010940710.1">
    <property type="nucleotide sequence ID" value="NC_002939.5"/>
</dbReference>
<dbReference type="SMR" id="Q74H60"/>
<dbReference type="FunCoup" id="Q74H60">
    <property type="interactions" value="496"/>
</dbReference>
<dbReference type="STRING" id="243231.GSU0032"/>
<dbReference type="EnsemblBacteria" id="AAR33367">
    <property type="protein sequence ID" value="AAR33367"/>
    <property type="gene ID" value="GSU0032"/>
</dbReference>
<dbReference type="KEGG" id="gsu:GSU0032"/>
<dbReference type="PATRIC" id="fig|243231.5.peg.33"/>
<dbReference type="eggNOG" id="COG0576">
    <property type="taxonomic scope" value="Bacteria"/>
</dbReference>
<dbReference type="HOGENOM" id="CLU_057217_6_0_7"/>
<dbReference type="InParanoid" id="Q74H60"/>
<dbReference type="OrthoDB" id="9789811at2"/>
<dbReference type="Proteomes" id="UP000000577">
    <property type="component" value="Chromosome"/>
</dbReference>
<dbReference type="GO" id="GO:0005829">
    <property type="term" value="C:cytosol"/>
    <property type="evidence" value="ECO:0000318"/>
    <property type="project" value="GO_Central"/>
</dbReference>
<dbReference type="GO" id="GO:0000774">
    <property type="term" value="F:adenyl-nucleotide exchange factor activity"/>
    <property type="evidence" value="ECO:0000318"/>
    <property type="project" value="GO_Central"/>
</dbReference>
<dbReference type="GO" id="GO:0042803">
    <property type="term" value="F:protein homodimerization activity"/>
    <property type="evidence" value="ECO:0007669"/>
    <property type="project" value="InterPro"/>
</dbReference>
<dbReference type="GO" id="GO:0051087">
    <property type="term" value="F:protein-folding chaperone binding"/>
    <property type="evidence" value="ECO:0007669"/>
    <property type="project" value="InterPro"/>
</dbReference>
<dbReference type="GO" id="GO:0051082">
    <property type="term" value="F:unfolded protein binding"/>
    <property type="evidence" value="ECO:0000318"/>
    <property type="project" value="GO_Central"/>
</dbReference>
<dbReference type="GO" id="GO:0006457">
    <property type="term" value="P:protein folding"/>
    <property type="evidence" value="ECO:0007669"/>
    <property type="project" value="InterPro"/>
</dbReference>
<dbReference type="CDD" id="cd00446">
    <property type="entry name" value="GrpE"/>
    <property type="match status" value="1"/>
</dbReference>
<dbReference type="FunFam" id="2.30.22.10:FF:000001">
    <property type="entry name" value="Protein GrpE"/>
    <property type="match status" value="1"/>
</dbReference>
<dbReference type="Gene3D" id="3.90.20.20">
    <property type="match status" value="1"/>
</dbReference>
<dbReference type="Gene3D" id="2.30.22.10">
    <property type="entry name" value="Head domain of nucleotide exchange factor GrpE"/>
    <property type="match status" value="1"/>
</dbReference>
<dbReference type="HAMAP" id="MF_01151">
    <property type="entry name" value="GrpE"/>
    <property type="match status" value="1"/>
</dbReference>
<dbReference type="InterPro" id="IPR000740">
    <property type="entry name" value="GrpE"/>
</dbReference>
<dbReference type="InterPro" id="IPR013805">
    <property type="entry name" value="GrpE_coiled_coil"/>
</dbReference>
<dbReference type="InterPro" id="IPR009012">
    <property type="entry name" value="GrpE_head"/>
</dbReference>
<dbReference type="NCBIfam" id="NF010738">
    <property type="entry name" value="PRK14140.1"/>
    <property type="match status" value="1"/>
</dbReference>
<dbReference type="NCBIfam" id="NF010748">
    <property type="entry name" value="PRK14150.1"/>
    <property type="match status" value="1"/>
</dbReference>
<dbReference type="NCBIfam" id="NF010755">
    <property type="entry name" value="PRK14158.1"/>
    <property type="match status" value="1"/>
</dbReference>
<dbReference type="PANTHER" id="PTHR21237">
    <property type="entry name" value="GRPE PROTEIN"/>
    <property type="match status" value="1"/>
</dbReference>
<dbReference type="PANTHER" id="PTHR21237:SF23">
    <property type="entry name" value="GRPE PROTEIN HOMOLOG, MITOCHONDRIAL"/>
    <property type="match status" value="1"/>
</dbReference>
<dbReference type="Pfam" id="PF01025">
    <property type="entry name" value="GrpE"/>
    <property type="match status" value="1"/>
</dbReference>
<dbReference type="PRINTS" id="PR00773">
    <property type="entry name" value="GRPEPROTEIN"/>
</dbReference>
<dbReference type="SUPFAM" id="SSF58014">
    <property type="entry name" value="Coiled-coil domain of nucleotide exchange factor GrpE"/>
    <property type="match status" value="1"/>
</dbReference>
<dbReference type="SUPFAM" id="SSF51064">
    <property type="entry name" value="Head domain of nucleotide exchange factor GrpE"/>
    <property type="match status" value="1"/>
</dbReference>
<dbReference type="PROSITE" id="PS01071">
    <property type="entry name" value="GRPE"/>
    <property type="match status" value="1"/>
</dbReference>